<reference key="1">
    <citation type="journal article" date="2011" name="J. Bacteriol.">
        <title>Comparative genomics of 28 Salmonella enterica isolates: evidence for CRISPR-mediated adaptive sublineage evolution.</title>
        <authorList>
            <person name="Fricke W.F."/>
            <person name="Mammel M.K."/>
            <person name="McDermott P.F."/>
            <person name="Tartera C."/>
            <person name="White D.G."/>
            <person name="Leclerc J.E."/>
            <person name="Ravel J."/>
            <person name="Cebula T.A."/>
        </authorList>
    </citation>
    <scope>NUCLEOTIDE SEQUENCE [LARGE SCALE GENOMIC DNA]</scope>
    <source>
        <strain>SL483</strain>
    </source>
</reference>
<sequence>MFTINAEVRKEQGKGASRRLRAANKFPAIIYGGSEAPIAIELDHDQVMNMQAKAEFYSEVLTLVVDGKEVKVKAQAVQRHAYKPKLTHIDFVRA</sequence>
<dbReference type="EMBL" id="CP001138">
    <property type="protein sequence ID" value="ACH52533.1"/>
    <property type="molecule type" value="Genomic_DNA"/>
</dbReference>
<dbReference type="RefSeq" id="WP_000494192.1">
    <property type="nucleotide sequence ID" value="NC_011149.1"/>
</dbReference>
<dbReference type="SMR" id="B5EYS6"/>
<dbReference type="KEGG" id="sea:SeAg_B2373"/>
<dbReference type="HOGENOM" id="CLU_137946_0_0_6"/>
<dbReference type="Proteomes" id="UP000008819">
    <property type="component" value="Chromosome"/>
</dbReference>
<dbReference type="GO" id="GO:0022625">
    <property type="term" value="C:cytosolic large ribosomal subunit"/>
    <property type="evidence" value="ECO:0007669"/>
    <property type="project" value="TreeGrafter"/>
</dbReference>
<dbReference type="GO" id="GO:0008097">
    <property type="term" value="F:5S rRNA binding"/>
    <property type="evidence" value="ECO:0007669"/>
    <property type="project" value="InterPro"/>
</dbReference>
<dbReference type="GO" id="GO:0003735">
    <property type="term" value="F:structural constituent of ribosome"/>
    <property type="evidence" value="ECO:0007669"/>
    <property type="project" value="InterPro"/>
</dbReference>
<dbReference type="GO" id="GO:0006412">
    <property type="term" value="P:translation"/>
    <property type="evidence" value="ECO:0007669"/>
    <property type="project" value="UniProtKB-UniRule"/>
</dbReference>
<dbReference type="CDD" id="cd00495">
    <property type="entry name" value="Ribosomal_L25_TL5_CTC"/>
    <property type="match status" value="1"/>
</dbReference>
<dbReference type="FunFam" id="2.40.240.10:FF:000002">
    <property type="entry name" value="50S ribosomal protein L25"/>
    <property type="match status" value="1"/>
</dbReference>
<dbReference type="Gene3D" id="2.40.240.10">
    <property type="entry name" value="Ribosomal Protein L25, Chain P"/>
    <property type="match status" value="1"/>
</dbReference>
<dbReference type="HAMAP" id="MF_01336">
    <property type="entry name" value="Ribosomal_bL25"/>
    <property type="match status" value="1"/>
</dbReference>
<dbReference type="InterPro" id="IPR020056">
    <property type="entry name" value="Rbsml_bL25/Gln-tRNA_synth_N"/>
</dbReference>
<dbReference type="InterPro" id="IPR011035">
    <property type="entry name" value="Ribosomal_bL25/Gln-tRNA_synth"/>
</dbReference>
<dbReference type="InterPro" id="IPR020055">
    <property type="entry name" value="Ribosomal_bL25_short"/>
</dbReference>
<dbReference type="InterPro" id="IPR029751">
    <property type="entry name" value="Ribosomal_L25_dom"/>
</dbReference>
<dbReference type="InterPro" id="IPR020930">
    <property type="entry name" value="Ribosomal_uL5_bac-type"/>
</dbReference>
<dbReference type="NCBIfam" id="NF004612">
    <property type="entry name" value="PRK05943.1"/>
    <property type="match status" value="1"/>
</dbReference>
<dbReference type="PANTHER" id="PTHR33284">
    <property type="entry name" value="RIBOSOMAL PROTEIN L25/GLN-TRNA SYNTHETASE, ANTI-CODON-BINDING DOMAIN-CONTAINING PROTEIN"/>
    <property type="match status" value="1"/>
</dbReference>
<dbReference type="PANTHER" id="PTHR33284:SF1">
    <property type="entry name" value="RIBOSOMAL PROTEIN L25_GLN-TRNA SYNTHETASE, ANTI-CODON-BINDING DOMAIN-CONTAINING PROTEIN"/>
    <property type="match status" value="1"/>
</dbReference>
<dbReference type="Pfam" id="PF01386">
    <property type="entry name" value="Ribosomal_L25p"/>
    <property type="match status" value="1"/>
</dbReference>
<dbReference type="SUPFAM" id="SSF50715">
    <property type="entry name" value="Ribosomal protein L25-like"/>
    <property type="match status" value="1"/>
</dbReference>
<keyword id="KW-0687">Ribonucleoprotein</keyword>
<keyword id="KW-0689">Ribosomal protein</keyword>
<keyword id="KW-0694">RNA-binding</keyword>
<keyword id="KW-0699">rRNA-binding</keyword>
<feature type="chain" id="PRO_1000142589" description="Large ribosomal subunit protein bL25">
    <location>
        <begin position="1"/>
        <end position="94"/>
    </location>
</feature>
<comment type="function">
    <text evidence="1">This is one of the proteins that binds to the 5S RNA in the ribosome where it forms part of the central protuberance.</text>
</comment>
<comment type="subunit">
    <text evidence="1">Part of the 50S ribosomal subunit; part of the 5S rRNA/L5/L18/L25 subcomplex. Contacts the 5S rRNA. Binds to the 5S rRNA independently of L5 and L18.</text>
</comment>
<comment type="similarity">
    <text evidence="1">Belongs to the bacterial ribosomal protein bL25 family.</text>
</comment>
<accession>B5EYS6</accession>
<evidence type="ECO:0000255" key="1">
    <source>
        <dbReference type="HAMAP-Rule" id="MF_01336"/>
    </source>
</evidence>
<evidence type="ECO:0000305" key="2"/>
<name>RL25_SALA4</name>
<organism>
    <name type="scientific">Salmonella agona (strain SL483)</name>
    <dbReference type="NCBI Taxonomy" id="454166"/>
    <lineage>
        <taxon>Bacteria</taxon>
        <taxon>Pseudomonadati</taxon>
        <taxon>Pseudomonadota</taxon>
        <taxon>Gammaproteobacteria</taxon>
        <taxon>Enterobacterales</taxon>
        <taxon>Enterobacteriaceae</taxon>
        <taxon>Salmonella</taxon>
    </lineage>
</organism>
<gene>
    <name evidence="1" type="primary">rplY</name>
    <name type="ordered locus">SeAg_B2373</name>
</gene>
<protein>
    <recommendedName>
        <fullName evidence="1">Large ribosomal subunit protein bL25</fullName>
    </recommendedName>
    <alternativeName>
        <fullName evidence="2">50S ribosomal protein L25</fullName>
    </alternativeName>
</protein>
<proteinExistence type="inferred from homology"/>